<organism>
    <name type="scientific">Staphylococcus aureus (strain Newman)</name>
    <dbReference type="NCBI Taxonomy" id="426430"/>
    <lineage>
        <taxon>Bacteria</taxon>
        <taxon>Bacillati</taxon>
        <taxon>Bacillota</taxon>
        <taxon>Bacilli</taxon>
        <taxon>Bacillales</taxon>
        <taxon>Staphylococcaceae</taxon>
        <taxon>Staphylococcus</taxon>
    </lineage>
</organism>
<protein>
    <recommendedName>
        <fullName>Membrane-associated protein TcaA</fullName>
    </recommendedName>
</protein>
<dbReference type="EMBL" id="AP009351">
    <property type="protein sequence ID" value="BAF68529.1"/>
    <property type="molecule type" value="Genomic_DNA"/>
</dbReference>
<dbReference type="RefSeq" id="WP_000833797.1">
    <property type="nucleotide sequence ID" value="NZ_CP023390.1"/>
</dbReference>
<dbReference type="KEGG" id="sae:NWMN_2257"/>
<dbReference type="HOGENOM" id="CLU_047245_0_0_9"/>
<dbReference type="Proteomes" id="UP000006386">
    <property type="component" value="Chromosome"/>
</dbReference>
<dbReference type="GO" id="GO:0005886">
    <property type="term" value="C:plasma membrane"/>
    <property type="evidence" value="ECO:0007669"/>
    <property type="project" value="UniProtKB-SubCell"/>
</dbReference>
<dbReference type="GO" id="GO:0008270">
    <property type="term" value="F:zinc ion binding"/>
    <property type="evidence" value="ECO:0007669"/>
    <property type="project" value="UniProtKB-KW"/>
</dbReference>
<dbReference type="GO" id="GO:0046677">
    <property type="term" value="P:response to antibiotic"/>
    <property type="evidence" value="ECO:0007669"/>
    <property type="project" value="UniProtKB-KW"/>
</dbReference>
<dbReference type="InterPro" id="IPR023599">
    <property type="entry name" value="Mem_prot_TcaA"/>
</dbReference>
<dbReference type="InterPro" id="IPR054529">
    <property type="entry name" value="TcaA_2nd"/>
</dbReference>
<dbReference type="InterPro" id="IPR054530">
    <property type="entry name" value="TcaA_4th"/>
</dbReference>
<dbReference type="PANTHER" id="PTHR40038">
    <property type="entry name" value="MEMBRANE-ASSOCIATED PROTEIN TCAA"/>
    <property type="match status" value="1"/>
</dbReference>
<dbReference type="PANTHER" id="PTHR40038:SF1">
    <property type="entry name" value="MEMBRANE-ASSOCIATED PROTEIN TCAA"/>
    <property type="match status" value="1"/>
</dbReference>
<dbReference type="Pfam" id="PF22813">
    <property type="entry name" value="TcaA_2nd"/>
    <property type="match status" value="1"/>
</dbReference>
<dbReference type="Pfam" id="PF22820">
    <property type="entry name" value="TcaA_3rd_4th"/>
    <property type="match status" value="1"/>
</dbReference>
<dbReference type="Pfam" id="PF22819">
    <property type="entry name" value="TcaA_5th"/>
    <property type="match status" value="1"/>
</dbReference>
<dbReference type="PIRSF" id="PIRSF032522">
    <property type="entry name" value="TcaA"/>
    <property type="match status" value="1"/>
</dbReference>
<name>TCAA_STAAE</name>
<sequence length="460" mass="52114">MKSCPKCGQQAQDDVQICTQCGHKFDSRQALYRKSTDEDIQTNNIKMRKMVPWAIGFFILILIIILFFLLRNFNSPEAQTKILVNAIENNDKQKVATLLSTKDNKVDSEEAKVYINYIKDEVGLKQFVSDLKNTVHKLNKSKTSVASYIQTRSGQNILRVSKNGTRYIFFDNMSFTAPTKQPIVKPKEKTKYEFKSGGKKKMVIAEANKVTPIGNFIPGTYRIPAMKSTENGDFAGHLKFDFRQSNSETVDVTEDFEEANISVTLKGDTKLNDSSKKVTINDHEMAFSSSKTYGPYPQNKDITISASGKAKDKTFTTQTKTIKASDLKYNTEITLNFDSEDIEDYVEKKEKEENSLKNKLIEFFAGYSLANNAAFNQSDFDFVSSYIKKGSSFYDDVKKRVSKGSLMMISSPQIIDAEKHGDKITATVRLINENGKQVDKEYELEQGSQDRLQLIKTSEK</sequence>
<keyword id="KW-0046">Antibiotic resistance</keyword>
<keyword id="KW-1003">Cell membrane</keyword>
<keyword id="KW-0472">Membrane</keyword>
<keyword id="KW-0479">Metal-binding</keyword>
<keyword id="KW-0812">Transmembrane</keyword>
<keyword id="KW-1133">Transmembrane helix</keyword>
<keyword id="KW-0862">Zinc</keyword>
<keyword id="KW-0863">Zinc-finger</keyword>
<evidence type="ECO:0000250" key="1"/>
<evidence type="ECO:0000255" key="2"/>
<evidence type="ECO:0000269" key="3">
    <source>
    </source>
</evidence>
<evidence type="ECO:0000305" key="4"/>
<accession>A6QJJ7</accession>
<comment type="function">
    <text evidence="1">Plays a major role in decreasing resistance to glycopeptide antibiotics.</text>
</comment>
<comment type="subcellular location">
    <subcellularLocation>
        <location evidence="1">Cell membrane</location>
        <topology evidence="1">Single-pass membrane protein</topology>
    </subcellularLocation>
</comment>
<comment type="induction">
    <text evidence="3">Induced by teicoplanin, vancomycin and oxacillin.</text>
</comment>
<comment type="similarity">
    <text evidence="4">Belongs to the TcaA family.</text>
</comment>
<reference key="1">
    <citation type="journal article" date="2008" name="J. Bacteriol.">
        <title>Genome sequence of Staphylococcus aureus strain Newman and comparative analysis of staphylococcal genomes: polymorphism and evolution of two major pathogenicity islands.</title>
        <authorList>
            <person name="Baba T."/>
            <person name="Bae T."/>
            <person name="Schneewind O."/>
            <person name="Takeuchi F."/>
            <person name="Hiramatsu K."/>
        </authorList>
    </citation>
    <scope>NUCLEOTIDE SEQUENCE [LARGE SCALE GENOMIC DNA]</scope>
    <source>
        <strain>Newman</strain>
    </source>
</reference>
<reference key="2">
    <citation type="journal article" date="2006" name="Biochim. Biophys. Acta">
        <title>Strain dependence of the cell wall-damage induced stimulon in Staphylococcus aureus.</title>
        <authorList>
            <person name="McCallum N."/>
            <person name="Spehar G."/>
            <person name="Bischoff M."/>
            <person name="Berger-Bachi B."/>
        </authorList>
    </citation>
    <scope>INDUCTION</scope>
</reference>
<feature type="chain" id="PRO_0000333170" description="Membrane-associated protein TcaA">
    <location>
        <begin position="1"/>
        <end position="460"/>
    </location>
</feature>
<feature type="topological domain" description="Cytoplasmic" evidence="2">
    <location>
        <begin position="1"/>
        <end position="49"/>
    </location>
</feature>
<feature type="transmembrane region" description="Helical" evidence="2">
    <location>
        <begin position="50"/>
        <end position="70"/>
    </location>
</feature>
<feature type="topological domain" description="Extracellular" evidence="2">
    <location>
        <begin position="71"/>
        <end position="460"/>
    </location>
</feature>
<feature type="zinc finger region" description="C4-type" evidence="2">
    <location>
        <begin position="4"/>
        <end position="21"/>
    </location>
</feature>
<proteinExistence type="evidence at transcript level"/>
<gene>
    <name type="primary">tcaA</name>
    <name type="ordered locus">NWMN_2257</name>
</gene>